<reference key="1">
    <citation type="journal article" date="2007" name="PLoS Genet.">
        <title>Patterns and implications of gene gain and loss in the evolution of Prochlorococcus.</title>
        <authorList>
            <person name="Kettler G.C."/>
            <person name="Martiny A.C."/>
            <person name="Huang K."/>
            <person name="Zucker J."/>
            <person name="Coleman M.L."/>
            <person name="Rodrigue S."/>
            <person name="Chen F."/>
            <person name="Lapidus A."/>
            <person name="Ferriera S."/>
            <person name="Johnson J."/>
            <person name="Steglich C."/>
            <person name="Church G.M."/>
            <person name="Richardson P."/>
            <person name="Chisholm S.W."/>
        </authorList>
    </citation>
    <scope>NUCLEOTIDE SEQUENCE [LARGE SCALE GENOMIC DNA]</scope>
    <source>
        <strain>MIT 9303</strain>
    </source>
</reference>
<evidence type="ECO:0000255" key="1">
    <source>
        <dbReference type="HAMAP-Rule" id="MF_00437"/>
    </source>
</evidence>
<proteinExistence type="inferred from homology"/>
<keyword id="KW-0472">Membrane</keyword>
<keyword id="KW-0602">Photosynthesis</keyword>
<keyword id="KW-0793">Thylakoid</keyword>
<keyword id="KW-0812">Transmembrane</keyword>
<keyword id="KW-1133">Transmembrane helix</keyword>
<feature type="chain" id="PRO_1000025948" description="Photosystem I assembly protein Ycf4">
    <location>
        <begin position="1"/>
        <end position="191"/>
    </location>
</feature>
<feature type="transmembrane region" description="Helical" evidence="1">
    <location>
        <begin position="33"/>
        <end position="53"/>
    </location>
</feature>
<feature type="transmembrane region" description="Helical" evidence="1">
    <location>
        <begin position="74"/>
        <end position="94"/>
    </location>
</feature>
<gene>
    <name evidence="1" type="primary">ycf4</name>
    <name type="ordered locus">P9303_08451</name>
</gene>
<accession>A2C7Y6</accession>
<comment type="function">
    <text evidence="1">Seems to be required for the assembly of the photosystem I complex.</text>
</comment>
<comment type="subcellular location">
    <subcellularLocation>
        <location evidence="1">Cellular thylakoid membrane</location>
        <topology evidence="1">Multi-pass membrane protein</topology>
    </subcellularLocation>
</comment>
<comment type="similarity">
    <text evidence="1">Belongs to the Ycf4 family.</text>
</comment>
<name>YCF4_PROM3</name>
<protein>
    <recommendedName>
        <fullName evidence="1">Photosystem I assembly protein Ycf4</fullName>
    </recommendedName>
</protein>
<organism>
    <name type="scientific">Prochlorococcus marinus (strain MIT 9303)</name>
    <dbReference type="NCBI Taxonomy" id="59922"/>
    <lineage>
        <taxon>Bacteria</taxon>
        <taxon>Bacillati</taxon>
        <taxon>Cyanobacteriota</taxon>
        <taxon>Cyanophyceae</taxon>
        <taxon>Synechococcales</taxon>
        <taxon>Prochlorococcaceae</taxon>
        <taxon>Prochlorococcus</taxon>
    </lineage>
</organism>
<sequence>MSADLQETPKAGDASLERLEQSVLGFRRLSNQLLAVIVTIGGLGFTLTCLSSYLGRDLLPIGSPSSLLFVPQGLVMGLYGIAGLLLASYLWAMININLGAGSNNFDKASGMVKICRRGYFKLISAEFPLKDVKAVKVEVRDGFNPLRRLSLRVQGRRDITLTRVGQPLPLAQLEQDGAELARFLDVNLEGL</sequence>
<dbReference type="EMBL" id="CP000554">
    <property type="protein sequence ID" value="ABM77596.1"/>
    <property type="molecule type" value="Genomic_DNA"/>
</dbReference>
<dbReference type="RefSeq" id="WP_011825507.1">
    <property type="nucleotide sequence ID" value="NC_008820.1"/>
</dbReference>
<dbReference type="SMR" id="A2C7Y6"/>
<dbReference type="STRING" id="59922.P9303_08451"/>
<dbReference type="KEGG" id="pmf:P9303_08451"/>
<dbReference type="HOGENOM" id="CLU_095465_0_0_3"/>
<dbReference type="BioCyc" id="PMAR59922:G1G80-760-MONOMER"/>
<dbReference type="Proteomes" id="UP000002274">
    <property type="component" value="Chromosome"/>
</dbReference>
<dbReference type="GO" id="GO:0009522">
    <property type="term" value="C:photosystem I"/>
    <property type="evidence" value="ECO:0007669"/>
    <property type="project" value="InterPro"/>
</dbReference>
<dbReference type="GO" id="GO:0031676">
    <property type="term" value="C:plasma membrane-derived thylakoid membrane"/>
    <property type="evidence" value="ECO:0007669"/>
    <property type="project" value="UniProtKB-SubCell"/>
</dbReference>
<dbReference type="GO" id="GO:0015979">
    <property type="term" value="P:photosynthesis"/>
    <property type="evidence" value="ECO:0007669"/>
    <property type="project" value="UniProtKB-UniRule"/>
</dbReference>
<dbReference type="HAMAP" id="MF_00437">
    <property type="entry name" value="Ycf4"/>
    <property type="match status" value="1"/>
</dbReference>
<dbReference type="InterPro" id="IPR003359">
    <property type="entry name" value="PSI_Ycf4_assembly"/>
</dbReference>
<dbReference type="NCBIfam" id="NF002712">
    <property type="entry name" value="PRK02542.1"/>
    <property type="match status" value="1"/>
</dbReference>
<dbReference type="Pfam" id="PF02392">
    <property type="entry name" value="Ycf4"/>
    <property type="match status" value="1"/>
</dbReference>